<name>ARLY_EHRCJ</name>
<sequence>MKNPLWGGRFTTSSSDIMKKINESISFDKTLYEEDIAGSIAHCKMLVNQRIISKYEGQLIIHGLEVIQNQISSGTFEFSTDLEDIHMNIEHNLKKMVGNIAGKLHTARSRNDQVATDFKLWIRKSIVKIEHYLHELQDTIINLAESHYNTIMPGFTHLQIAQPVTLGHHLMAYFEMFKRDFSRWQDLYKRMNQCPLGSAALAGTSFPIDRHFVAQELGFYSPTENSIDAVSDRDYAIEFLSNASICIMHLSRLAEEIILWCSYNFKFITLSDNITTGSSIMPQKKNPDAAELIRGKTGRIFASLNQILVVMKGLPLAYSKDMQEDKEALFDATNNLMLCIEAMNNMLSNIIINKNNMLKAAEHDYSTATDLADWLVKNLNLSFREAHETTGQIVKLAEHNQCKLHELTLEQIKTIIPSINDTVFSVLSVENSVASRTSYGGTAPTNVIEAIKKGKAYLSNIKFSQTDKNNI</sequence>
<organism>
    <name type="scientific">Ehrlichia canis (strain Jake)</name>
    <dbReference type="NCBI Taxonomy" id="269484"/>
    <lineage>
        <taxon>Bacteria</taxon>
        <taxon>Pseudomonadati</taxon>
        <taxon>Pseudomonadota</taxon>
        <taxon>Alphaproteobacteria</taxon>
        <taxon>Rickettsiales</taxon>
        <taxon>Anaplasmataceae</taxon>
        <taxon>Ehrlichia</taxon>
    </lineage>
</organism>
<accession>Q3YSS4</accession>
<feature type="chain" id="PRO_0000240727" description="Argininosuccinate lyase">
    <location>
        <begin position="1"/>
        <end position="471"/>
    </location>
</feature>
<dbReference type="EC" id="4.3.2.1" evidence="1"/>
<dbReference type="EMBL" id="CP000107">
    <property type="protein sequence ID" value="AAZ68231.1"/>
    <property type="molecule type" value="Genomic_DNA"/>
</dbReference>
<dbReference type="RefSeq" id="WP_011304309.1">
    <property type="nucleotide sequence ID" value="NC_007354.1"/>
</dbReference>
<dbReference type="SMR" id="Q3YSS4"/>
<dbReference type="FunCoup" id="Q3YSS4">
    <property type="interactions" value="286"/>
</dbReference>
<dbReference type="STRING" id="269484.Ecaj_0180"/>
<dbReference type="KEGG" id="ecn:Ecaj_0180"/>
<dbReference type="eggNOG" id="COG0165">
    <property type="taxonomic scope" value="Bacteria"/>
</dbReference>
<dbReference type="HOGENOM" id="CLU_027272_2_3_5"/>
<dbReference type="InParanoid" id="Q3YSS4"/>
<dbReference type="UniPathway" id="UPA00068">
    <property type="reaction ID" value="UER00114"/>
</dbReference>
<dbReference type="Proteomes" id="UP000000435">
    <property type="component" value="Chromosome"/>
</dbReference>
<dbReference type="GO" id="GO:0005829">
    <property type="term" value="C:cytosol"/>
    <property type="evidence" value="ECO:0007669"/>
    <property type="project" value="TreeGrafter"/>
</dbReference>
<dbReference type="GO" id="GO:0004056">
    <property type="term" value="F:argininosuccinate lyase activity"/>
    <property type="evidence" value="ECO:0007669"/>
    <property type="project" value="UniProtKB-UniRule"/>
</dbReference>
<dbReference type="GO" id="GO:0042450">
    <property type="term" value="P:arginine biosynthetic process via ornithine"/>
    <property type="evidence" value="ECO:0007669"/>
    <property type="project" value="InterPro"/>
</dbReference>
<dbReference type="GO" id="GO:0006526">
    <property type="term" value="P:L-arginine biosynthetic process"/>
    <property type="evidence" value="ECO:0007669"/>
    <property type="project" value="UniProtKB-UniRule"/>
</dbReference>
<dbReference type="CDD" id="cd01359">
    <property type="entry name" value="Argininosuccinate_lyase"/>
    <property type="match status" value="1"/>
</dbReference>
<dbReference type="FunFam" id="1.10.275.10:FF:000002">
    <property type="entry name" value="Argininosuccinate lyase"/>
    <property type="match status" value="1"/>
</dbReference>
<dbReference type="FunFam" id="1.10.40.30:FF:000001">
    <property type="entry name" value="Argininosuccinate lyase"/>
    <property type="match status" value="1"/>
</dbReference>
<dbReference type="FunFam" id="1.20.200.10:FF:000015">
    <property type="entry name" value="argininosuccinate lyase isoform X2"/>
    <property type="match status" value="1"/>
</dbReference>
<dbReference type="Gene3D" id="1.10.40.30">
    <property type="entry name" value="Fumarase/aspartase (C-terminal domain)"/>
    <property type="match status" value="1"/>
</dbReference>
<dbReference type="Gene3D" id="1.20.200.10">
    <property type="entry name" value="Fumarase/aspartase (Central domain)"/>
    <property type="match status" value="1"/>
</dbReference>
<dbReference type="Gene3D" id="1.10.275.10">
    <property type="entry name" value="Fumarase/aspartase (N-terminal domain)"/>
    <property type="match status" value="1"/>
</dbReference>
<dbReference type="HAMAP" id="MF_00006">
    <property type="entry name" value="Arg_succ_lyase"/>
    <property type="match status" value="1"/>
</dbReference>
<dbReference type="InterPro" id="IPR029419">
    <property type="entry name" value="Arg_succ_lyase_C"/>
</dbReference>
<dbReference type="InterPro" id="IPR009049">
    <property type="entry name" value="Argininosuccinate_lyase"/>
</dbReference>
<dbReference type="InterPro" id="IPR024083">
    <property type="entry name" value="Fumarase/histidase_N"/>
</dbReference>
<dbReference type="InterPro" id="IPR020557">
    <property type="entry name" value="Fumarate_lyase_CS"/>
</dbReference>
<dbReference type="InterPro" id="IPR000362">
    <property type="entry name" value="Fumarate_lyase_fam"/>
</dbReference>
<dbReference type="InterPro" id="IPR022761">
    <property type="entry name" value="Fumarate_lyase_N"/>
</dbReference>
<dbReference type="InterPro" id="IPR008948">
    <property type="entry name" value="L-Aspartase-like"/>
</dbReference>
<dbReference type="NCBIfam" id="TIGR00838">
    <property type="entry name" value="argH"/>
    <property type="match status" value="1"/>
</dbReference>
<dbReference type="PANTHER" id="PTHR43814">
    <property type="entry name" value="ARGININOSUCCINATE LYASE"/>
    <property type="match status" value="1"/>
</dbReference>
<dbReference type="PANTHER" id="PTHR43814:SF1">
    <property type="entry name" value="ARGININOSUCCINATE LYASE"/>
    <property type="match status" value="1"/>
</dbReference>
<dbReference type="Pfam" id="PF14698">
    <property type="entry name" value="ASL_C2"/>
    <property type="match status" value="1"/>
</dbReference>
<dbReference type="Pfam" id="PF00206">
    <property type="entry name" value="Lyase_1"/>
    <property type="match status" value="1"/>
</dbReference>
<dbReference type="PRINTS" id="PR00145">
    <property type="entry name" value="ARGSUCLYASE"/>
</dbReference>
<dbReference type="PRINTS" id="PR00149">
    <property type="entry name" value="FUMRATELYASE"/>
</dbReference>
<dbReference type="SUPFAM" id="SSF48557">
    <property type="entry name" value="L-aspartase-like"/>
    <property type="match status" value="1"/>
</dbReference>
<dbReference type="PROSITE" id="PS00163">
    <property type="entry name" value="FUMARATE_LYASES"/>
    <property type="match status" value="1"/>
</dbReference>
<protein>
    <recommendedName>
        <fullName evidence="1">Argininosuccinate lyase</fullName>
        <shortName evidence="1">ASAL</shortName>
        <ecNumber evidence="1">4.3.2.1</ecNumber>
    </recommendedName>
    <alternativeName>
        <fullName evidence="1">Arginosuccinase</fullName>
    </alternativeName>
</protein>
<keyword id="KW-0028">Amino-acid biosynthesis</keyword>
<keyword id="KW-0055">Arginine biosynthesis</keyword>
<keyword id="KW-0963">Cytoplasm</keyword>
<keyword id="KW-0456">Lyase</keyword>
<gene>
    <name evidence="1" type="primary">argH</name>
    <name type="ordered locus">Ecaj_0180</name>
</gene>
<reference key="1">
    <citation type="journal article" date="2006" name="J. Bacteriol.">
        <title>The genome of the obligately intracellular bacterium Ehrlichia canis reveals themes of complex membrane structure and immune evasion strategies.</title>
        <authorList>
            <person name="Mavromatis K."/>
            <person name="Doyle C.K."/>
            <person name="Lykidis A."/>
            <person name="Ivanova N."/>
            <person name="Francino M.P."/>
            <person name="Chain P."/>
            <person name="Shin M."/>
            <person name="Malfatti S."/>
            <person name="Larimer F."/>
            <person name="Copeland A."/>
            <person name="Detter J.C."/>
            <person name="Land M."/>
            <person name="Richardson P.M."/>
            <person name="Yu X.J."/>
            <person name="Walker D.H."/>
            <person name="McBride J.W."/>
            <person name="Kyrpides N.C."/>
        </authorList>
    </citation>
    <scope>NUCLEOTIDE SEQUENCE [LARGE SCALE GENOMIC DNA]</scope>
    <source>
        <strain>Jake</strain>
    </source>
</reference>
<comment type="catalytic activity">
    <reaction evidence="1">
        <text>2-(N(omega)-L-arginino)succinate = fumarate + L-arginine</text>
        <dbReference type="Rhea" id="RHEA:24020"/>
        <dbReference type="ChEBI" id="CHEBI:29806"/>
        <dbReference type="ChEBI" id="CHEBI:32682"/>
        <dbReference type="ChEBI" id="CHEBI:57472"/>
        <dbReference type="EC" id="4.3.2.1"/>
    </reaction>
</comment>
<comment type="pathway">
    <text evidence="1">Amino-acid biosynthesis; L-arginine biosynthesis; L-arginine from L-ornithine and carbamoyl phosphate: step 3/3.</text>
</comment>
<comment type="subcellular location">
    <subcellularLocation>
        <location evidence="1">Cytoplasm</location>
    </subcellularLocation>
</comment>
<comment type="similarity">
    <text evidence="1">Belongs to the lyase 1 family. Argininosuccinate lyase subfamily.</text>
</comment>
<evidence type="ECO:0000255" key="1">
    <source>
        <dbReference type="HAMAP-Rule" id="MF_00006"/>
    </source>
</evidence>
<proteinExistence type="inferred from homology"/>